<feature type="chain" id="PRO_0000073358" description="ATP synthase gamma chain">
    <location>
        <begin position="1"/>
        <end position="286"/>
    </location>
</feature>
<proteinExistence type="inferred from homology"/>
<accession>P05436</accession>
<keyword id="KW-0066">ATP synthesis</keyword>
<keyword id="KW-0997">Cell inner membrane</keyword>
<keyword id="KW-1003">Cell membrane</keyword>
<keyword id="KW-0139">CF(1)</keyword>
<keyword id="KW-0375">Hydrogen ion transport</keyword>
<keyword id="KW-0406">Ion transport</keyword>
<keyword id="KW-0472">Membrane</keyword>
<keyword id="KW-0813">Transport</keyword>
<protein>
    <recommendedName>
        <fullName evidence="1">ATP synthase gamma chain</fullName>
    </recommendedName>
    <alternativeName>
        <fullName evidence="1">ATP synthase F1 sector gamma subunit</fullName>
    </alternativeName>
    <alternativeName>
        <fullName evidence="1">F-ATPase gamma subunit</fullName>
    </alternativeName>
</protein>
<dbReference type="EMBL" id="Z00018">
    <property type="protein sequence ID" value="CAA77314.1"/>
    <property type="molecule type" value="Genomic_DNA"/>
</dbReference>
<dbReference type="PIR" id="S04673">
    <property type="entry name" value="S04673"/>
</dbReference>
<dbReference type="SMR" id="P05436"/>
<dbReference type="GO" id="GO:0005886">
    <property type="term" value="C:plasma membrane"/>
    <property type="evidence" value="ECO:0007669"/>
    <property type="project" value="UniProtKB-SubCell"/>
</dbReference>
<dbReference type="GO" id="GO:0045259">
    <property type="term" value="C:proton-transporting ATP synthase complex"/>
    <property type="evidence" value="ECO:0007669"/>
    <property type="project" value="UniProtKB-KW"/>
</dbReference>
<dbReference type="GO" id="GO:0005524">
    <property type="term" value="F:ATP binding"/>
    <property type="evidence" value="ECO:0007669"/>
    <property type="project" value="UniProtKB-UniRule"/>
</dbReference>
<dbReference type="GO" id="GO:0046933">
    <property type="term" value="F:proton-transporting ATP synthase activity, rotational mechanism"/>
    <property type="evidence" value="ECO:0007669"/>
    <property type="project" value="UniProtKB-UniRule"/>
</dbReference>
<dbReference type="GO" id="GO:0042777">
    <property type="term" value="P:proton motive force-driven plasma membrane ATP synthesis"/>
    <property type="evidence" value="ECO:0007669"/>
    <property type="project" value="UniProtKB-UniRule"/>
</dbReference>
<dbReference type="CDD" id="cd12151">
    <property type="entry name" value="F1-ATPase_gamma"/>
    <property type="match status" value="1"/>
</dbReference>
<dbReference type="FunFam" id="1.10.287.80:FF:000001">
    <property type="entry name" value="ATP synthase gamma chain"/>
    <property type="match status" value="1"/>
</dbReference>
<dbReference type="Gene3D" id="3.40.1380.10">
    <property type="match status" value="1"/>
</dbReference>
<dbReference type="Gene3D" id="1.10.287.80">
    <property type="entry name" value="ATP synthase, gamma subunit, helix hairpin domain"/>
    <property type="match status" value="1"/>
</dbReference>
<dbReference type="HAMAP" id="MF_00815">
    <property type="entry name" value="ATP_synth_gamma_bact"/>
    <property type="match status" value="1"/>
</dbReference>
<dbReference type="InterPro" id="IPR035968">
    <property type="entry name" value="ATP_synth_F1_ATPase_gsu"/>
</dbReference>
<dbReference type="InterPro" id="IPR000131">
    <property type="entry name" value="ATP_synth_F1_gsu"/>
</dbReference>
<dbReference type="InterPro" id="IPR023632">
    <property type="entry name" value="ATP_synth_F1_gsu_CS"/>
</dbReference>
<dbReference type="NCBIfam" id="TIGR01146">
    <property type="entry name" value="ATPsyn_F1gamma"/>
    <property type="match status" value="1"/>
</dbReference>
<dbReference type="NCBIfam" id="NF004146">
    <property type="entry name" value="PRK05621.1-4"/>
    <property type="match status" value="1"/>
</dbReference>
<dbReference type="PANTHER" id="PTHR11693">
    <property type="entry name" value="ATP SYNTHASE GAMMA CHAIN"/>
    <property type="match status" value="1"/>
</dbReference>
<dbReference type="PANTHER" id="PTHR11693:SF22">
    <property type="entry name" value="ATP SYNTHASE SUBUNIT GAMMA, MITOCHONDRIAL"/>
    <property type="match status" value="1"/>
</dbReference>
<dbReference type="Pfam" id="PF00231">
    <property type="entry name" value="ATP-synt"/>
    <property type="match status" value="1"/>
</dbReference>
<dbReference type="PIRSF" id="PIRSF039089">
    <property type="entry name" value="ATP_synthase_gamma"/>
    <property type="match status" value="1"/>
</dbReference>
<dbReference type="PRINTS" id="PR00126">
    <property type="entry name" value="ATPASEGAMMA"/>
</dbReference>
<dbReference type="SUPFAM" id="SSF52943">
    <property type="entry name" value="ATP synthase (F1-ATPase), gamma subunit"/>
    <property type="match status" value="1"/>
</dbReference>
<dbReference type="PROSITE" id="PS00153">
    <property type="entry name" value="ATPASE_GAMMA"/>
    <property type="match status" value="1"/>
</dbReference>
<name>ATPG_FUSBL</name>
<sequence length="286" mass="30872">MPSLKDLKNRIGSVKNTRKITKAMQMVAAAKLRRAQDSAEAARPYAERMGAVIASLASGQGAGAPRLLAGNGRDQIHLLVVMTSERGLCGGFNSTIVRLARQRANELVAQGKTVKILTVGKKGREQLKRDWASAFVGHVDLSDVRRLGYSNAQGIAREVLAAFEAGEADVVTIFYNRFQSVISQVPTAQQVIPAKFEAAETNALYDYEPSEEAILADLLPRGVATQIFTALLENAASEQGARMSAMDNATRNAGDMINKLTIQYNRSRQAAITKELIEIISGAEAL</sequence>
<organism>
    <name type="scientific">Fuscovulum blasticum</name>
    <name type="common">Rhodobacter blasticus</name>
    <name type="synonym">Rhodopseudomonas blastica</name>
    <dbReference type="NCBI Taxonomy" id="1075"/>
    <lineage>
        <taxon>Bacteria</taxon>
        <taxon>Pseudomonadati</taxon>
        <taxon>Pseudomonadota</taxon>
        <taxon>Alphaproteobacteria</taxon>
        <taxon>Rhodobacterales</taxon>
        <taxon>Paracoccaceae</taxon>
        <taxon>Pseudogemmobacter</taxon>
    </lineage>
</organism>
<gene>
    <name evidence="1" type="primary">atpG</name>
</gene>
<reference key="1">
    <citation type="journal article" date="1984" name="J. Mol. Biol.">
        <title>Rhodopseudomonas blastica atp operon. Nucleotide sequence and transcription.</title>
        <authorList>
            <person name="Tybulewicz V.L.J."/>
            <person name="Falk G."/>
            <person name="Walker J.E."/>
        </authorList>
    </citation>
    <scope>NUCLEOTIDE SEQUENCE [GENOMIC DNA]</scope>
</reference>
<comment type="function">
    <text evidence="1">Produces ATP from ADP in the presence of a proton gradient across the membrane. The gamma chain is believed to be important in regulating ATPase activity and the flow of protons through the CF(0) complex.</text>
</comment>
<comment type="subunit">
    <text evidence="1">F-type ATPases have 2 components, CF(1) - the catalytic core - and CF(0) - the membrane proton channel. CF(1) has five subunits: alpha(3), beta(3), gamma(1), delta(1), epsilon(1). CF(0) has three main subunits: a, b and c.</text>
</comment>
<comment type="subcellular location">
    <subcellularLocation>
        <location evidence="1">Cell inner membrane</location>
        <topology evidence="1">Peripheral membrane protein</topology>
    </subcellularLocation>
</comment>
<comment type="similarity">
    <text evidence="1">Belongs to the ATPase gamma chain family.</text>
</comment>
<evidence type="ECO:0000255" key="1">
    <source>
        <dbReference type="HAMAP-Rule" id="MF_00815"/>
    </source>
</evidence>